<gene>
    <name evidence="1" type="primary">rpsE</name>
    <name type="ordered locus">GSU2840</name>
</gene>
<reference key="1">
    <citation type="journal article" date="2003" name="Science">
        <title>Genome of Geobacter sulfurreducens: metal reduction in subsurface environments.</title>
        <authorList>
            <person name="Methe B.A."/>
            <person name="Nelson K.E."/>
            <person name="Eisen J.A."/>
            <person name="Paulsen I.T."/>
            <person name="Nelson W.C."/>
            <person name="Heidelberg J.F."/>
            <person name="Wu D."/>
            <person name="Wu M."/>
            <person name="Ward N.L."/>
            <person name="Beanan M.J."/>
            <person name="Dodson R.J."/>
            <person name="Madupu R."/>
            <person name="Brinkac L.M."/>
            <person name="Daugherty S.C."/>
            <person name="DeBoy R.T."/>
            <person name="Durkin A.S."/>
            <person name="Gwinn M.L."/>
            <person name="Kolonay J.F."/>
            <person name="Sullivan S.A."/>
            <person name="Haft D.H."/>
            <person name="Selengut J."/>
            <person name="Davidsen T.M."/>
            <person name="Zafar N."/>
            <person name="White O."/>
            <person name="Tran B."/>
            <person name="Romero C."/>
            <person name="Forberger H.A."/>
            <person name="Weidman J.F."/>
            <person name="Khouri H.M."/>
            <person name="Feldblyum T.V."/>
            <person name="Utterback T.R."/>
            <person name="Van Aken S.E."/>
            <person name="Lovley D.R."/>
            <person name="Fraser C.M."/>
        </authorList>
    </citation>
    <scope>NUCLEOTIDE SEQUENCE [LARGE SCALE GENOMIC DNA]</scope>
    <source>
        <strain>ATCC 51573 / DSM 12127 / PCA</strain>
    </source>
</reference>
<dbReference type="EMBL" id="AE017180">
    <property type="protein sequence ID" value="AAR36233.1"/>
    <property type="molecule type" value="Genomic_DNA"/>
</dbReference>
<dbReference type="RefSeq" id="NP_953883.1">
    <property type="nucleotide sequence ID" value="NC_002939.5"/>
</dbReference>
<dbReference type="RefSeq" id="WP_010943469.1">
    <property type="nucleotide sequence ID" value="NC_002939.5"/>
</dbReference>
<dbReference type="SMR" id="Q749A4"/>
<dbReference type="FunCoup" id="Q749A4">
    <property type="interactions" value="725"/>
</dbReference>
<dbReference type="STRING" id="243231.GSU2840"/>
<dbReference type="EnsemblBacteria" id="AAR36233">
    <property type="protein sequence ID" value="AAR36233"/>
    <property type="gene ID" value="GSU2840"/>
</dbReference>
<dbReference type="KEGG" id="gsu:GSU2840"/>
<dbReference type="PATRIC" id="fig|243231.5.peg.2866"/>
<dbReference type="eggNOG" id="COG0098">
    <property type="taxonomic scope" value="Bacteria"/>
</dbReference>
<dbReference type="HOGENOM" id="CLU_065898_2_2_7"/>
<dbReference type="InParanoid" id="Q749A4"/>
<dbReference type="OrthoDB" id="9809045at2"/>
<dbReference type="Proteomes" id="UP000000577">
    <property type="component" value="Chromosome"/>
</dbReference>
<dbReference type="GO" id="GO:0022627">
    <property type="term" value="C:cytosolic small ribosomal subunit"/>
    <property type="evidence" value="ECO:0000318"/>
    <property type="project" value="GO_Central"/>
</dbReference>
<dbReference type="GO" id="GO:0019843">
    <property type="term" value="F:rRNA binding"/>
    <property type="evidence" value="ECO:0007669"/>
    <property type="project" value="UniProtKB-UniRule"/>
</dbReference>
<dbReference type="GO" id="GO:0003735">
    <property type="term" value="F:structural constituent of ribosome"/>
    <property type="evidence" value="ECO:0000318"/>
    <property type="project" value="GO_Central"/>
</dbReference>
<dbReference type="GO" id="GO:0006412">
    <property type="term" value="P:translation"/>
    <property type="evidence" value="ECO:0000318"/>
    <property type="project" value="GO_Central"/>
</dbReference>
<dbReference type="FunFam" id="3.30.160.20:FF:000001">
    <property type="entry name" value="30S ribosomal protein S5"/>
    <property type="match status" value="1"/>
</dbReference>
<dbReference type="FunFam" id="3.30.230.10:FF:000002">
    <property type="entry name" value="30S ribosomal protein S5"/>
    <property type="match status" value="1"/>
</dbReference>
<dbReference type="Gene3D" id="3.30.160.20">
    <property type="match status" value="1"/>
</dbReference>
<dbReference type="Gene3D" id="3.30.230.10">
    <property type="match status" value="1"/>
</dbReference>
<dbReference type="HAMAP" id="MF_01307_B">
    <property type="entry name" value="Ribosomal_uS5_B"/>
    <property type="match status" value="1"/>
</dbReference>
<dbReference type="InterPro" id="IPR020568">
    <property type="entry name" value="Ribosomal_Su5_D2-typ_SF"/>
</dbReference>
<dbReference type="InterPro" id="IPR000851">
    <property type="entry name" value="Ribosomal_uS5"/>
</dbReference>
<dbReference type="InterPro" id="IPR005712">
    <property type="entry name" value="Ribosomal_uS5_bac-type"/>
</dbReference>
<dbReference type="InterPro" id="IPR005324">
    <property type="entry name" value="Ribosomal_uS5_C"/>
</dbReference>
<dbReference type="InterPro" id="IPR013810">
    <property type="entry name" value="Ribosomal_uS5_N"/>
</dbReference>
<dbReference type="InterPro" id="IPR018192">
    <property type="entry name" value="Ribosomal_uS5_N_CS"/>
</dbReference>
<dbReference type="InterPro" id="IPR014721">
    <property type="entry name" value="Ribsml_uS5_D2-typ_fold_subgr"/>
</dbReference>
<dbReference type="NCBIfam" id="TIGR01021">
    <property type="entry name" value="rpsE_bact"/>
    <property type="match status" value="1"/>
</dbReference>
<dbReference type="PANTHER" id="PTHR48277">
    <property type="entry name" value="MITOCHONDRIAL RIBOSOMAL PROTEIN S5"/>
    <property type="match status" value="1"/>
</dbReference>
<dbReference type="PANTHER" id="PTHR48277:SF1">
    <property type="entry name" value="MITOCHONDRIAL RIBOSOMAL PROTEIN S5"/>
    <property type="match status" value="1"/>
</dbReference>
<dbReference type="Pfam" id="PF00333">
    <property type="entry name" value="Ribosomal_S5"/>
    <property type="match status" value="1"/>
</dbReference>
<dbReference type="Pfam" id="PF03719">
    <property type="entry name" value="Ribosomal_S5_C"/>
    <property type="match status" value="1"/>
</dbReference>
<dbReference type="SUPFAM" id="SSF54768">
    <property type="entry name" value="dsRNA-binding domain-like"/>
    <property type="match status" value="1"/>
</dbReference>
<dbReference type="SUPFAM" id="SSF54211">
    <property type="entry name" value="Ribosomal protein S5 domain 2-like"/>
    <property type="match status" value="1"/>
</dbReference>
<dbReference type="PROSITE" id="PS00585">
    <property type="entry name" value="RIBOSOMAL_S5"/>
    <property type="match status" value="1"/>
</dbReference>
<dbReference type="PROSITE" id="PS50881">
    <property type="entry name" value="S5_DSRBD"/>
    <property type="match status" value="1"/>
</dbReference>
<sequence>MYKINPNDLNLTDKVVHISRVAKVVKGGRRFSFSALVVVGDGNGCVGYGLGKANEVPEAIRKGVEQAKKNLIKVPIVEGHTIPYEVLGHFGAGRVLIKPASAGTGVIAGGAARAVFEAAGLHNVLSKCLGSNNPHNVVKAAFNGLAQLRSPEEIMARRGVTE</sequence>
<name>RS5_GEOSL</name>
<evidence type="ECO:0000255" key="1">
    <source>
        <dbReference type="HAMAP-Rule" id="MF_01307"/>
    </source>
</evidence>
<evidence type="ECO:0000305" key="2"/>
<protein>
    <recommendedName>
        <fullName evidence="1">Small ribosomal subunit protein uS5</fullName>
    </recommendedName>
    <alternativeName>
        <fullName evidence="2">30S ribosomal protein S5</fullName>
    </alternativeName>
</protein>
<keyword id="KW-1185">Reference proteome</keyword>
<keyword id="KW-0687">Ribonucleoprotein</keyword>
<keyword id="KW-0689">Ribosomal protein</keyword>
<keyword id="KW-0694">RNA-binding</keyword>
<keyword id="KW-0699">rRNA-binding</keyword>
<organism>
    <name type="scientific">Geobacter sulfurreducens (strain ATCC 51573 / DSM 12127 / PCA)</name>
    <dbReference type="NCBI Taxonomy" id="243231"/>
    <lineage>
        <taxon>Bacteria</taxon>
        <taxon>Pseudomonadati</taxon>
        <taxon>Thermodesulfobacteriota</taxon>
        <taxon>Desulfuromonadia</taxon>
        <taxon>Geobacterales</taxon>
        <taxon>Geobacteraceae</taxon>
        <taxon>Geobacter</taxon>
    </lineage>
</organism>
<comment type="function">
    <text evidence="1">With S4 and S12 plays an important role in translational accuracy.</text>
</comment>
<comment type="function">
    <text evidence="1">Located at the back of the 30S subunit body where it stabilizes the conformation of the head with respect to the body.</text>
</comment>
<comment type="subunit">
    <text evidence="1">Part of the 30S ribosomal subunit. Contacts proteins S4 and S8.</text>
</comment>
<comment type="domain">
    <text>The N-terminal domain interacts with the head of the 30S subunit; the C-terminal domain interacts with the body and contacts protein S4. The interaction surface between S4 and S5 is involved in control of translational fidelity.</text>
</comment>
<comment type="similarity">
    <text evidence="1">Belongs to the universal ribosomal protein uS5 family.</text>
</comment>
<accession>Q749A4</accession>
<feature type="chain" id="PRO_0000131519" description="Small ribosomal subunit protein uS5">
    <location>
        <begin position="1"/>
        <end position="162"/>
    </location>
</feature>
<feature type="domain" description="S5 DRBM" evidence="1">
    <location>
        <begin position="11"/>
        <end position="74"/>
    </location>
</feature>
<proteinExistence type="inferred from homology"/>